<sequence length="136" mass="15281">MLQPKRTKFRKMHKGRNRGLAQGTDVSFGSFGLKAVGRGRLTARQIEAARRAMTRAVKRQGKIWIRVFPDKPITEKPLAVRMGKGKGNVEYWVALIQPGKVLYEMDGVPEELAREAFKLAAAKLPIKTTFVTKTVM</sequence>
<accession>B7N197</accession>
<protein>
    <recommendedName>
        <fullName evidence="1">Large ribosomal subunit protein uL16</fullName>
    </recommendedName>
    <alternativeName>
        <fullName evidence="2">50S ribosomal protein L16</fullName>
    </alternativeName>
</protein>
<comment type="function">
    <text evidence="1">Binds 23S rRNA and is also seen to make contacts with the A and possibly P site tRNAs.</text>
</comment>
<comment type="subunit">
    <text evidence="1">Part of the 50S ribosomal subunit.</text>
</comment>
<comment type="similarity">
    <text evidence="1">Belongs to the universal ribosomal protein uL16 family.</text>
</comment>
<proteinExistence type="inferred from homology"/>
<feature type="chain" id="PRO_1000166359" description="Large ribosomal subunit protein uL16">
    <location>
        <begin position="1"/>
        <end position="136"/>
    </location>
</feature>
<gene>
    <name evidence="1" type="primary">rplP</name>
    <name type="ordered locus">ECED1_3976</name>
</gene>
<evidence type="ECO:0000255" key="1">
    <source>
        <dbReference type="HAMAP-Rule" id="MF_01342"/>
    </source>
</evidence>
<evidence type="ECO:0000305" key="2"/>
<organism>
    <name type="scientific">Escherichia coli O81 (strain ED1a)</name>
    <dbReference type="NCBI Taxonomy" id="585397"/>
    <lineage>
        <taxon>Bacteria</taxon>
        <taxon>Pseudomonadati</taxon>
        <taxon>Pseudomonadota</taxon>
        <taxon>Gammaproteobacteria</taxon>
        <taxon>Enterobacterales</taxon>
        <taxon>Enterobacteriaceae</taxon>
        <taxon>Escherichia</taxon>
    </lineage>
</organism>
<reference key="1">
    <citation type="journal article" date="2009" name="PLoS Genet.">
        <title>Organised genome dynamics in the Escherichia coli species results in highly diverse adaptive paths.</title>
        <authorList>
            <person name="Touchon M."/>
            <person name="Hoede C."/>
            <person name="Tenaillon O."/>
            <person name="Barbe V."/>
            <person name="Baeriswyl S."/>
            <person name="Bidet P."/>
            <person name="Bingen E."/>
            <person name="Bonacorsi S."/>
            <person name="Bouchier C."/>
            <person name="Bouvet O."/>
            <person name="Calteau A."/>
            <person name="Chiapello H."/>
            <person name="Clermont O."/>
            <person name="Cruveiller S."/>
            <person name="Danchin A."/>
            <person name="Diard M."/>
            <person name="Dossat C."/>
            <person name="Karoui M.E."/>
            <person name="Frapy E."/>
            <person name="Garry L."/>
            <person name="Ghigo J.M."/>
            <person name="Gilles A.M."/>
            <person name="Johnson J."/>
            <person name="Le Bouguenec C."/>
            <person name="Lescat M."/>
            <person name="Mangenot S."/>
            <person name="Martinez-Jehanne V."/>
            <person name="Matic I."/>
            <person name="Nassif X."/>
            <person name="Oztas S."/>
            <person name="Petit M.A."/>
            <person name="Pichon C."/>
            <person name="Rouy Z."/>
            <person name="Ruf C.S."/>
            <person name="Schneider D."/>
            <person name="Tourret J."/>
            <person name="Vacherie B."/>
            <person name="Vallenet D."/>
            <person name="Medigue C."/>
            <person name="Rocha E.P.C."/>
            <person name="Denamur E."/>
        </authorList>
    </citation>
    <scope>NUCLEOTIDE SEQUENCE [LARGE SCALE GENOMIC DNA]</scope>
    <source>
        <strain>ED1a</strain>
    </source>
</reference>
<name>RL16_ECO81</name>
<keyword id="KW-0687">Ribonucleoprotein</keyword>
<keyword id="KW-0689">Ribosomal protein</keyword>
<keyword id="KW-0694">RNA-binding</keyword>
<keyword id="KW-0699">rRNA-binding</keyword>
<keyword id="KW-0820">tRNA-binding</keyword>
<dbReference type="EMBL" id="CU928162">
    <property type="protein sequence ID" value="CAR10115.2"/>
    <property type="molecule type" value="Genomic_DNA"/>
</dbReference>
<dbReference type="RefSeq" id="WP_000941212.1">
    <property type="nucleotide sequence ID" value="NC_011745.1"/>
</dbReference>
<dbReference type="SMR" id="B7N197"/>
<dbReference type="GeneID" id="93778674"/>
<dbReference type="KEGG" id="ecq:ECED1_3976"/>
<dbReference type="HOGENOM" id="CLU_078858_2_1_6"/>
<dbReference type="Proteomes" id="UP000000748">
    <property type="component" value="Chromosome"/>
</dbReference>
<dbReference type="GO" id="GO:0022625">
    <property type="term" value="C:cytosolic large ribosomal subunit"/>
    <property type="evidence" value="ECO:0007669"/>
    <property type="project" value="TreeGrafter"/>
</dbReference>
<dbReference type="GO" id="GO:0019843">
    <property type="term" value="F:rRNA binding"/>
    <property type="evidence" value="ECO:0007669"/>
    <property type="project" value="UniProtKB-UniRule"/>
</dbReference>
<dbReference type="GO" id="GO:0003735">
    <property type="term" value="F:structural constituent of ribosome"/>
    <property type="evidence" value="ECO:0007669"/>
    <property type="project" value="InterPro"/>
</dbReference>
<dbReference type="GO" id="GO:0000049">
    <property type="term" value="F:tRNA binding"/>
    <property type="evidence" value="ECO:0007669"/>
    <property type="project" value="UniProtKB-KW"/>
</dbReference>
<dbReference type="GO" id="GO:0006412">
    <property type="term" value="P:translation"/>
    <property type="evidence" value="ECO:0007669"/>
    <property type="project" value="UniProtKB-UniRule"/>
</dbReference>
<dbReference type="CDD" id="cd01433">
    <property type="entry name" value="Ribosomal_L16_L10e"/>
    <property type="match status" value="1"/>
</dbReference>
<dbReference type="FunFam" id="3.90.1170.10:FF:000001">
    <property type="entry name" value="50S ribosomal protein L16"/>
    <property type="match status" value="1"/>
</dbReference>
<dbReference type="Gene3D" id="3.90.1170.10">
    <property type="entry name" value="Ribosomal protein L10e/L16"/>
    <property type="match status" value="1"/>
</dbReference>
<dbReference type="HAMAP" id="MF_01342">
    <property type="entry name" value="Ribosomal_uL16"/>
    <property type="match status" value="1"/>
</dbReference>
<dbReference type="InterPro" id="IPR047873">
    <property type="entry name" value="Ribosomal_uL16"/>
</dbReference>
<dbReference type="InterPro" id="IPR000114">
    <property type="entry name" value="Ribosomal_uL16_bact-type"/>
</dbReference>
<dbReference type="InterPro" id="IPR020798">
    <property type="entry name" value="Ribosomal_uL16_CS"/>
</dbReference>
<dbReference type="InterPro" id="IPR016180">
    <property type="entry name" value="Ribosomal_uL16_dom"/>
</dbReference>
<dbReference type="InterPro" id="IPR036920">
    <property type="entry name" value="Ribosomal_uL16_sf"/>
</dbReference>
<dbReference type="NCBIfam" id="TIGR01164">
    <property type="entry name" value="rplP_bact"/>
    <property type="match status" value="1"/>
</dbReference>
<dbReference type="PANTHER" id="PTHR12220">
    <property type="entry name" value="50S/60S RIBOSOMAL PROTEIN L16"/>
    <property type="match status" value="1"/>
</dbReference>
<dbReference type="PANTHER" id="PTHR12220:SF13">
    <property type="entry name" value="LARGE RIBOSOMAL SUBUNIT PROTEIN UL16M"/>
    <property type="match status" value="1"/>
</dbReference>
<dbReference type="Pfam" id="PF00252">
    <property type="entry name" value="Ribosomal_L16"/>
    <property type="match status" value="1"/>
</dbReference>
<dbReference type="PRINTS" id="PR00060">
    <property type="entry name" value="RIBOSOMALL16"/>
</dbReference>
<dbReference type="SUPFAM" id="SSF54686">
    <property type="entry name" value="Ribosomal protein L16p/L10e"/>
    <property type="match status" value="1"/>
</dbReference>
<dbReference type="PROSITE" id="PS00586">
    <property type="entry name" value="RIBOSOMAL_L16_1"/>
    <property type="match status" value="1"/>
</dbReference>
<dbReference type="PROSITE" id="PS00701">
    <property type="entry name" value="RIBOSOMAL_L16_2"/>
    <property type="match status" value="1"/>
</dbReference>